<reference key="1">
    <citation type="submission" date="2003-03" db="EMBL/GenBank/DDBJ databases">
        <title>The complete genome sequence of Neisseria gonorrhoeae.</title>
        <authorList>
            <person name="Lewis L.A."/>
            <person name="Gillaspy A.F."/>
            <person name="McLaughlin R.E."/>
            <person name="Gipson M."/>
            <person name="Ducey T.F."/>
            <person name="Ownbey T."/>
            <person name="Hartman K."/>
            <person name="Nydick C."/>
            <person name="Carson M.B."/>
            <person name="Vaughn J."/>
            <person name="Thomson C."/>
            <person name="Song L."/>
            <person name="Lin S."/>
            <person name="Yuan X."/>
            <person name="Najar F."/>
            <person name="Zhan M."/>
            <person name="Ren Q."/>
            <person name="Zhu H."/>
            <person name="Qi S."/>
            <person name="Kenton S.M."/>
            <person name="Lai H."/>
            <person name="White J.D."/>
            <person name="Clifton S."/>
            <person name="Roe B.A."/>
            <person name="Dyer D.W."/>
        </authorList>
    </citation>
    <scope>NUCLEOTIDE SEQUENCE [LARGE SCALE GENOMIC DNA]</scope>
    <source>
        <strain>ATCC 700825 / FA 1090</strain>
    </source>
</reference>
<dbReference type="EC" id="5.4.2.10" evidence="1"/>
<dbReference type="EMBL" id="AE004969">
    <property type="protein sequence ID" value="AAW89991.2"/>
    <property type="molecule type" value="Genomic_DNA"/>
</dbReference>
<dbReference type="RefSeq" id="WP_010358843.1">
    <property type="nucleotide sequence ID" value="NC_002946.2"/>
</dbReference>
<dbReference type="SMR" id="Q5F746"/>
<dbReference type="STRING" id="242231.NGO_1341"/>
<dbReference type="KEGG" id="ngo:NGO_1341"/>
<dbReference type="PATRIC" id="fig|242231.10.peg.1576"/>
<dbReference type="HOGENOM" id="CLU_016950_7_0_4"/>
<dbReference type="Proteomes" id="UP000000535">
    <property type="component" value="Chromosome"/>
</dbReference>
<dbReference type="GO" id="GO:0005829">
    <property type="term" value="C:cytosol"/>
    <property type="evidence" value="ECO:0007669"/>
    <property type="project" value="TreeGrafter"/>
</dbReference>
<dbReference type="GO" id="GO:0000287">
    <property type="term" value="F:magnesium ion binding"/>
    <property type="evidence" value="ECO:0007669"/>
    <property type="project" value="UniProtKB-UniRule"/>
</dbReference>
<dbReference type="GO" id="GO:0008966">
    <property type="term" value="F:phosphoglucosamine mutase activity"/>
    <property type="evidence" value="ECO:0007669"/>
    <property type="project" value="UniProtKB-UniRule"/>
</dbReference>
<dbReference type="GO" id="GO:0004615">
    <property type="term" value="F:phosphomannomutase activity"/>
    <property type="evidence" value="ECO:0007669"/>
    <property type="project" value="TreeGrafter"/>
</dbReference>
<dbReference type="GO" id="GO:0005975">
    <property type="term" value="P:carbohydrate metabolic process"/>
    <property type="evidence" value="ECO:0007669"/>
    <property type="project" value="InterPro"/>
</dbReference>
<dbReference type="GO" id="GO:0009252">
    <property type="term" value="P:peptidoglycan biosynthetic process"/>
    <property type="evidence" value="ECO:0007669"/>
    <property type="project" value="TreeGrafter"/>
</dbReference>
<dbReference type="GO" id="GO:0006048">
    <property type="term" value="P:UDP-N-acetylglucosamine biosynthetic process"/>
    <property type="evidence" value="ECO:0007669"/>
    <property type="project" value="TreeGrafter"/>
</dbReference>
<dbReference type="CDD" id="cd05802">
    <property type="entry name" value="GlmM"/>
    <property type="match status" value="1"/>
</dbReference>
<dbReference type="FunFam" id="3.30.310.50:FF:000001">
    <property type="entry name" value="Phosphoglucosamine mutase"/>
    <property type="match status" value="1"/>
</dbReference>
<dbReference type="FunFam" id="3.40.120.10:FF:000001">
    <property type="entry name" value="Phosphoglucosamine mutase"/>
    <property type="match status" value="1"/>
</dbReference>
<dbReference type="FunFam" id="3.40.120.10:FF:000003">
    <property type="entry name" value="Phosphoglucosamine mutase"/>
    <property type="match status" value="1"/>
</dbReference>
<dbReference type="Gene3D" id="3.40.120.10">
    <property type="entry name" value="Alpha-D-Glucose-1,6-Bisphosphate, subunit A, domain 3"/>
    <property type="match status" value="3"/>
</dbReference>
<dbReference type="Gene3D" id="3.30.310.50">
    <property type="entry name" value="Alpha-D-phosphohexomutase, C-terminal domain"/>
    <property type="match status" value="1"/>
</dbReference>
<dbReference type="HAMAP" id="MF_01554_B">
    <property type="entry name" value="GlmM_B"/>
    <property type="match status" value="1"/>
</dbReference>
<dbReference type="InterPro" id="IPR005844">
    <property type="entry name" value="A-D-PHexomutase_a/b/a-I"/>
</dbReference>
<dbReference type="InterPro" id="IPR016055">
    <property type="entry name" value="A-D-PHexomutase_a/b/a-I/II/III"/>
</dbReference>
<dbReference type="InterPro" id="IPR005845">
    <property type="entry name" value="A-D-PHexomutase_a/b/a-II"/>
</dbReference>
<dbReference type="InterPro" id="IPR005846">
    <property type="entry name" value="A-D-PHexomutase_a/b/a-III"/>
</dbReference>
<dbReference type="InterPro" id="IPR005843">
    <property type="entry name" value="A-D-PHexomutase_C"/>
</dbReference>
<dbReference type="InterPro" id="IPR036900">
    <property type="entry name" value="A-D-PHexomutase_C_sf"/>
</dbReference>
<dbReference type="InterPro" id="IPR005841">
    <property type="entry name" value="Alpha-D-phosphohexomutase_SF"/>
</dbReference>
<dbReference type="InterPro" id="IPR006352">
    <property type="entry name" value="GlmM_bact"/>
</dbReference>
<dbReference type="InterPro" id="IPR050060">
    <property type="entry name" value="Phosphoglucosamine_mutase"/>
</dbReference>
<dbReference type="NCBIfam" id="TIGR01455">
    <property type="entry name" value="glmM"/>
    <property type="match status" value="1"/>
</dbReference>
<dbReference type="NCBIfam" id="NF008139">
    <property type="entry name" value="PRK10887.1"/>
    <property type="match status" value="1"/>
</dbReference>
<dbReference type="PANTHER" id="PTHR42946:SF1">
    <property type="entry name" value="PHOSPHOGLUCOMUTASE (ALPHA-D-GLUCOSE-1,6-BISPHOSPHATE-DEPENDENT)"/>
    <property type="match status" value="1"/>
</dbReference>
<dbReference type="PANTHER" id="PTHR42946">
    <property type="entry name" value="PHOSPHOHEXOSE MUTASE"/>
    <property type="match status" value="1"/>
</dbReference>
<dbReference type="Pfam" id="PF02878">
    <property type="entry name" value="PGM_PMM_I"/>
    <property type="match status" value="1"/>
</dbReference>
<dbReference type="Pfam" id="PF02879">
    <property type="entry name" value="PGM_PMM_II"/>
    <property type="match status" value="1"/>
</dbReference>
<dbReference type="Pfam" id="PF02880">
    <property type="entry name" value="PGM_PMM_III"/>
    <property type="match status" value="1"/>
</dbReference>
<dbReference type="Pfam" id="PF00408">
    <property type="entry name" value="PGM_PMM_IV"/>
    <property type="match status" value="1"/>
</dbReference>
<dbReference type="PRINTS" id="PR00509">
    <property type="entry name" value="PGMPMM"/>
</dbReference>
<dbReference type="SUPFAM" id="SSF55957">
    <property type="entry name" value="Phosphoglucomutase, C-terminal domain"/>
    <property type="match status" value="1"/>
</dbReference>
<dbReference type="SUPFAM" id="SSF53738">
    <property type="entry name" value="Phosphoglucomutase, first 3 domains"/>
    <property type="match status" value="3"/>
</dbReference>
<protein>
    <recommendedName>
        <fullName evidence="1">Phosphoglucosamine mutase</fullName>
        <ecNumber evidence="1">5.4.2.10</ecNumber>
    </recommendedName>
</protein>
<gene>
    <name evidence="1" type="primary">glmM</name>
    <name type="ordered locus">NGO_1341</name>
</gene>
<name>GLMM_NEIG1</name>
<keyword id="KW-0413">Isomerase</keyword>
<keyword id="KW-0460">Magnesium</keyword>
<keyword id="KW-0479">Metal-binding</keyword>
<keyword id="KW-0597">Phosphoprotein</keyword>
<keyword id="KW-1185">Reference proteome</keyword>
<feature type="chain" id="PRO_0000147919" description="Phosphoglucosamine mutase">
    <location>
        <begin position="1"/>
        <end position="444"/>
    </location>
</feature>
<feature type="active site" description="Phosphoserine intermediate" evidence="1">
    <location>
        <position position="104"/>
    </location>
</feature>
<feature type="binding site" description="via phosphate group" evidence="1">
    <location>
        <position position="104"/>
    </location>
    <ligand>
        <name>Mg(2+)</name>
        <dbReference type="ChEBI" id="CHEBI:18420"/>
    </ligand>
</feature>
<feature type="binding site" evidence="1">
    <location>
        <position position="243"/>
    </location>
    <ligand>
        <name>Mg(2+)</name>
        <dbReference type="ChEBI" id="CHEBI:18420"/>
    </ligand>
</feature>
<feature type="binding site" evidence="1">
    <location>
        <position position="245"/>
    </location>
    <ligand>
        <name>Mg(2+)</name>
        <dbReference type="ChEBI" id="CHEBI:18420"/>
    </ligand>
</feature>
<feature type="binding site" evidence="1">
    <location>
        <position position="247"/>
    </location>
    <ligand>
        <name>Mg(2+)</name>
        <dbReference type="ChEBI" id="CHEBI:18420"/>
    </ligand>
</feature>
<feature type="modified residue" description="Phosphoserine" evidence="1">
    <location>
        <position position="104"/>
    </location>
</feature>
<sequence>MAKKYFGTDGVRGEVGQFPITPDFVLKLGYAAGQVLVQHDTDQKPTVLIGKDTRISGYMLEAALVAGFTAAGVNVVQTGPLPTPGVAYLTRALRLSAGVMISASHNTYSDNGIKFFAEGGVKLSDEVELEIEAKIDEEMKTQPSARLGRARRISGADDRYIEFCKSTFPGHSDLRGLKLVIDTANGAGYGVAPKVFHELGAQVVSIGNEPNGYNINEKCGATHTKTLQAAVLQNEADYGIALDGDGDRLMMVDKNRQVYDGDSLIYVIAKARAREGINIGGVVGTVMTNMAMEIALKEQGVDFCRAKVGDRYVLEQLNQRGWLIGGEASGHILCMDKHNTGDGIISALQVLAALQILNQDLATVCADWQPYPQTMINVRIQKGQKWQEASKDVLAEVEKELEGKGRVVLRASGTEPVVRVMVEARQADWARDGAERIAAAIGGI</sequence>
<organism>
    <name type="scientific">Neisseria gonorrhoeae (strain ATCC 700825 / FA 1090)</name>
    <dbReference type="NCBI Taxonomy" id="242231"/>
    <lineage>
        <taxon>Bacteria</taxon>
        <taxon>Pseudomonadati</taxon>
        <taxon>Pseudomonadota</taxon>
        <taxon>Betaproteobacteria</taxon>
        <taxon>Neisseriales</taxon>
        <taxon>Neisseriaceae</taxon>
        <taxon>Neisseria</taxon>
    </lineage>
</organism>
<evidence type="ECO:0000255" key="1">
    <source>
        <dbReference type="HAMAP-Rule" id="MF_01554"/>
    </source>
</evidence>
<proteinExistence type="inferred from homology"/>
<accession>Q5F746</accession>
<comment type="function">
    <text evidence="1">Catalyzes the conversion of glucosamine-6-phosphate to glucosamine-1-phosphate.</text>
</comment>
<comment type="catalytic activity">
    <reaction evidence="1">
        <text>alpha-D-glucosamine 1-phosphate = D-glucosamine 6-phosphate</text>
        <dbReference type="Rhea" id="RHEA:23424"/>
        <dbReference type="ChEBI" id="CHEBI:58516"/>
        <dbReference type="ChEBI" id="CHEBI:58725"/>
        <dbReference type="EC" id="5.4.2.10"/>
    </reaction>
</comment>
<comment type="cofactor">
    <cofactor evidence="1">
        <name>Mg(2+)</name>
        <dbReference type="ChEBI" id="CHEBI:18420"/>
    </cofactor>
    <text evidence="1">Binds 1 Mg(2+) ion per subunit.</text>
</comment>
<comment type="PTM">
    <text evidence="1">Activated by phosphorylation.</text>
</comment>
<comment type="similarity">
    <text evidence="1">Belongs to the phosphohexose mutase family.</text>
</comment>